<keyword id="KW-0067">ATP-binding</keyword>
<keyword id="KW-0436">Ligase</keyword>
<keyword id="KW-0547">Nucleotide-binding</keyword>
<keyword id="KW-0648">Protein biosynthesis</keyword>
<proteinExistence type="inferred from homology"/>
<organism>
    <name type="scientific">Mycobacterium bovis (strain BCG / Pasteur 1173P2)</name>
    <dbReference type="NCBI Taxonomy" id="410289"/>
    <lineage>
        <taxon>Bacteria</taxon>
        <taxon>Bacillati</taxon>
        <taxon>Actinomycetota</taxon>
        <taxon>Actinomycetes</taxon>
        <taxon>Mycobacteriales</taxon>
        <taxon>Mycobacteriaceae</taxon>
        <taxon>Mycobacterium</taxon>
        <taxon>Mycobacterium tuberculosis complex</taxon>
    </lineage>
</organism>
<name>GATA_MYCBP</name>
<accession>A1KN06</accession>
<comment type="function">
    <text evidence="1">Allows the formation of correctly charged Gln-tRNA(Gln) through the transamidation of misacylated Glu-tRNA(Gln) in organisms which lack glutaminyl-tRNA synthetase. The reaction takes place in the presence of glutamine and ATP through an activated gamma-phospho-Glu-tRNA(Gln).</text>
</comment>
<comment type="catalytic activity">
    <reaction evidence="1">
        <text>L-glutamyl-tRNA(Gln) + L-glutamine + ATP + H2O = L-glutaminyl-tRNA(Gln) + L-glutamate + ADP + phosphate + H(+)</text>
        <dbReference type="Rhea" id="RHEA:17521"/>
        <dbReference type="Rhea" id="RHEA-COMP:9681"/>
        <dbReference type="Rhea" id="RHEA-COMP:9684"/>
        <dbReference type="ChEBI" id="CHEBI:15377"/>
        <dbReference type="ChEBI" id="CHEBI:15378"/>
        <dbReference type="ChEBI" id="CHEBI:29985"/>
        <dbReference type="ChEBI" id="CHEBI:30616"/>
        <dbReference type="ChEBI" id="CHEBI:43474"/>
        <dbReference type="ChEBI" id="CHEBI:58359"/>
        <dbReference type="ChEBI" id="CHEBI:78520"/>
        <dbReference type="ChEBI" id="CHEBI:78521"/>
        <dbReference type="ChEBI" id="CHEBI:456216"/>
        <dbReference type="EC" id="6.3.5.7"/>
    </reaction>
</comment>
<comment type="subunit">
    <text evidence="1">Heterotrimer of A, B and C subunits.</text>
</comment>
<comment type="similarity">
    <text evidence="1">Belongs to the amidase family. GatA subfamily.</text>
</comment>
<protein>
    <recommendedName>
        <fullName evidence="1">Glutamyl-tRNA(Gln) amidotransferase subunit A</fullName>
        <shortName evidence="1">Glu-ADT subunit A</shortName>
        <ecNumber evidence="1">6.3.5.7</ecNumber>
    </recommendedName>
</protein>
<sequence>MTDIIRSDAATLAAKIAIKEVSSTEITRACLDQIEATDETYHAFLHVAADEALAAAAAVDKQVAAGEPLPSALAGVPLALKDVFTTSDMPTTCGSKILEGWRSPYDATLTARLRAAGIPILGKTNMDEFAMGSSTENSAYGPTRNPWNLDRVPGGSGGGSAAALAAFQAPLAIGSDTGGSIRQPAALTATVGVKPTYGTVSRYGLVACASSLDQGGPCARTVLDTALLHQVIAGHDPRDSTSVDAEVPDVVGAARAGAVGDLRGVRVGVVRQLHGGEGYQPGVLASFEAAVEQLTALGAEVSEVDCPHFDHALAAYYLILPSEVSSNLARFDAMRYGLRVGDDGTRSAEEVMAMTRAAGFGPEVKRRIMIGTYALSAGYYDAYYNQAQKVRTLIARDLDAAYRSVDVLVSPTTPTTAFRLGEKVDDPLAMYLFDLCTLPLNLAGHCGMSVPSGLSPDDGLPVGLQIMAPALADDRLYRVGAAYEAARGPLLSAI</sequence>
<feature type="chain" id="PRO_1000015866" description="Glutamyl-tRNA(Gln) amidotransferase subunit A">
    <location>
        <begin position="1"/>
        <end position="494"/>
    </location>
</feature>
<feature type="active site" description="Charge relay system" evidence="1">
    <location>
        <position position="81"/>
    </location>
</feature>
<feature type="active site" description="Charge relay system" evidence="1">
    <location>
        <position position="156"/>
    </location>
</feature>
<feature type="active site" description="Acyl-ester intermediate" evidence="1">
    <location>
        <position position="180"/>
    </location>
</feature>
<dbReference type="EC" id="6.3.5.7" evidence="1"/>
<dbReference type="EMBL" id="AM408590">
    <property type="protein sequence ID" value="CAL73022.1"/>
    <property type="molecule type" value="Genomic_DNA"/>
</dbReference>
<dbReference type="RefSeq" id="WP_010950812.1">
    <property type="nucleotide sequence ID" value="NC_008769.1"/>
</dbReference>
<dbReference type="SMR" id="A1KN06"/>
<dbReference type="KEGG" id="mbb:BCG_3033c"/>
<dbReference type="HOGENOM" id="CLU_009600_0_3_11"/>
<dbReference type="Proteomes" id="UP000001472">
    <property type="component" value="Chromosome"/>
</dbReference>
<dbReference type="GO" id="GO:0030956">
    <property type="term" value="C:glutamyl-tRNA(Gln) amidotransferase complex"/>
    <property type="evidence" value="ECO:0007669"/>
    <property type="project" value="InterPro"/>
</dbReference>
<dbReference type="GO" id="GO:0005524">
    <property type="term" value="F:ATP binding"/>
    <property type="evidence" value="ECO:0007669"/>
    <property type="project" value="UniProtKB-KW"/>
</dbReference>
<dbReference type="GO" id="GO:0050567">
    <property type="term" value="F:glutaminyl-tRNA synthase (glutamine-hydrolyzing) activity"/>
    <property type="evidence" value="ECO:0007669"/>
    <property type="project" value="UniProtKB-UniRule"/>
</dbReference>
<dbReference type="GO" id="GO:0006412">
    <property type="term" value="P:translation"/>
    <property type="evidence" value="ECO:0007669"/>
    <property type="project" value="UniProtKB-UniRule"/>
</dbReference>
<dbReference type="Gene3D" id="3.90.1300.10">
    <property type="entry name" value="Amidase signature (AS) domain"/>
    <property type="match status" value="1"/>
</dbReference>
<dbReference type="HAMAP" id="MF_00120">
    <property type="entry name" value="GatA"/>
    <property type="match status" value="1"/>
</dbReference>
<dbReference type="InterPro" id="IPR000120">
    <property type="entry name" value="Amidase"/>
</dbReference>
<dbReference type="InterPro" id="IPR020556">
    <property type="entry name" value="Amidase_CS"/>
</dbReference>
<dbReference type="InterPro" id="IPR023631">
    <property type="entry name" value="Amidase_dom"/>
</dbReference>
<dbReference type="InterPro" id="IPR036928">
    <property type="entry name" value="AS_sf"/>
</dbReference>
<dbReference type="InterPro" id="IPR004412">
    <property type="entry name" value="GatA"/>
</dbReference>
<dbReference type="NCBIfam" id="TIGR00132">
    <property type="entry name" value="gatA"/>
    <property type="match status" value="1"/>
</dbReference>
<dbReference type="PANTHER" id="PTHR11895:SF151">
    <property type="entry name" value="GLUTAMYL-TRNA(GLN) AMIDOTRANSFERASE SUBUNIT A"/>
    <property type="match status" value="1"/>
</dbReference>
<dbReference type="PANTHER" id="PTHR11895">
    <property type="entry name" value="TRANSAMIDASE"/>
    <property type="match status" value="1"/>
</dbReference>
<dbReference type="Pfam" id="PF01425">
    <property type="entry name" value="Amidase"/>
    <property type="match status" value="1"/>
</dbReference>
<dbReference type="SUPFAM" id="SSF75304">
    <property type="entry name" value="Amidase signature (AS) enzymes"/>
    <property type="match status" value="1"/>
</dbReference>
<dbReference type="PROSITE" id="PS00571">
    <property type="entry name" value="AMIDASES"/>
    <property type="match status" value="1"/>
</dbReference>
<gene>
    <name evidence="1" type="primary">gatA</name>
    <name type="ordered locus">BCG_3033c</name>
</gene>
<reference key="1">
    <citation type="journal article" date="2007" name="Proc. Natl. Acad. Sci. U.S.A.">
        <title>Genome plasticity of BCG and impact on vaccine efficacy.</title>
        <authorList>
            <person name="Brosch R."/>
            <person name="Gordon S.V."/>
            <person name="Garnier T."/>
            <person name="Eiglmeier K."/>
            <person name="Frigui W."/>
            <person name="Valenti P."/>
            <person name="Dos Santos S."/>
            <person name="Duthoy S."/>
            <person name="Lacroix C."/>
            <person name="Garcia-Pelayo C."/>
            <person name="Inwald J.K."/>
            <person name="Golby P."/>
            <person name="Garcia J.N."/>
            <person name="Hewinson R.G."/>
            <person name="Behr M.A."/>
            <person name="Quail M.A."/>
            <person name="Churcher C."/>
            <person name="Barrell B.G."/>
            <person name="Parkhill J."/>
            <person name="Cole S.T."/>
        </authorList>
    </citation>
    <scope>NUCLEOTIDE SEQUENCE [LARGE SCALE GENOMIC DNA]</scope>
    <source>
        <strain>BCG / Pasteur 1173P2</strain>
    </source>
</reference>
<evidence type="ECO:0000255" key="1">
    <source>
        <dbReference type="HAMAP-Rule" id="MF_00120"/>
    </source>
</evidence>